<reference key="1">
    <citation type="journal article" date="2005" name="Science">
        <title>The transcriptional landscape of the mammalian genome.</title>
        <authorList>
            <person name="Carninci P."/>
            <person name="Kasukawa T."/>
            <person name="Katayama S."/>
            <person name="Gough J."/>
            <person name="Frith M.C."/>
            <person name="Maeda N."/>
            <person name="Oyama R."/>
            <person name="Ravasi T."/>
            <person name="Lenhard B."/>
            <person name="Wells C."/>
            <person name="Kodzius R."/>
            <person name="Shimokawa K."/>
            <person name="Bajic V.B."/>
            <person name="Brenner S.E."/>
            <person name="Batalov S."/>
            <person name="Forrest A.R."/>
            <person name="Zavolan M."/>
            <person name="Davis M.J."/>
            <person name="Wilming L.G."/>
            <person name="Aidinis V."/>
            <person name="Allen J.E."/>
            <person name="Ambesi-Impiombato A."/>
            <person name="Apweiler R."/>
            <person name="Aturaliya R.N."/>
            <person name="Bailey T.L."/>
            <person name="Bansal M."/>
            <person name="Baxter L."/>
            <person name="Beisel K.W."/>
            <person name="Bersano T."/>
            <person name="Bono H."/>
            <person name="Chalk A.M."/>
            <person name="Chiu K.P."/>
            <person name="Choudhary V."/>
            <person name="Christoffels A."/>
            <person name="Clutterbuck D.R."/>
            <person name="Crowe M.L."/>
            <person name="Dalla E."/>
            <person name="Dalrymple B.P."/>
            <person name="de Bono B."/>
            <person name="Della Gatta G."/>
            <person name="di Bernardo D."/>
            <person name="Down T."/>
            <person name="Engstrom P."/>
            <person name="Fagiolini M."/>
            <person name="Faulkner G."/>
            <person name="Fletcher C.F."/>
            <person name="Fukushima T."/>
            <person name="Furuno M."/>
            <person name="Futaki S."/>
            <person name="Gariboldi M."/>
            <person name="Georgii-Hemming P."/>
            <person name="Gingeras T.R."/>
            <person name="Gojobori T."/>
            <person name="Green R.E."/>
            <person name="Gustincich S."/>
            <person name="Harbers M."/>
            <person name="Hayashi Y."/>
            <person name="Hensch T.K."/>
            <person name="Hirokawa N."/>
            <person name="Hill D."/>
            <person name="Huminiecki L."/>
            <person name="Iacono M."/>
            <person name="Ikeo K."/>
            <person name="Iwama A."/>
            <person name="Ishikawa T."/>
            <person name="Jakt M."/>
            <person name="Kanapin A."/>
            <person name="Katoh M."/>
            <person name="Kawasawa Y."/>
            <person name="Kelso J."/>
            <person name="Kitamura H."/>
            <person name="Kitano H."/>
            <person name="Kollias G."/>
            <person name="Krishnan S.P."/>
            <person name="Kruger A."/>
            <person name="Kummerfeld S.K."/>
            <person name="Kurochkin I.V."/>
            <person name="Lareau L.F."/>
            <person name="Lazarevic D."/>
            <person name="Lipovich L."/>
            <person name="Liu J."/>
            <person name="Liuni S."/>
            <person name="McWilliam S."/>
            <person name="Madan Babu M."/>
            <person name="Madera M."/>
            <person name="Marchionni L."/>
            <person name="Matsuda H."/>
            <person name="Matsuzawa S."/>
            <person name="Miki H."/>
            <person name="Mignone F."/>
            <person name="Miyake S."/>
            <person name="Morris K."/>
            <person name="Mottagui-Tabar S."/>
            <person name="Mulder N."/>
            <person name="Nakano N."/>
            <person name="Nakauchi H."/>
            <person name="Ng P."/>
            <person name="Nilsson R."/>
            <person name="Nishiguchi S."/>
            <person name="Nishikawa S."/>
            <person name="Nori F."/>
            <person name="Ohara O."/>
            <person name="Okazaki Y."/>
            <person name="Orlando V."/>
            <person name="Pang K.C."/>
            <person name="Pavan W.J."/>
            <person name="Pavesi G."/>
            <person name="Pesole G."/>
            <person name="Petrovsky N."/>
            <person name="Piazza S."/>
            <person name="Reed J."/>
            <person name="Reid J.F."/>
            <person name="Ring B.Z."/>
            <person name="Ringwald M."/>
            <person name="Rost B."/>
            <person name="Ruan Y."/>
            <person name="Salzberg S.L."/>
            <person name="Sandelin A."/>
            <person name="Schneider C."/>
            <person name="Schoenbach C."/>
            <person name="Sekiguchi K."/>
            <person name="Semple C.A."/>
            <person name="Seno S."/>
            <person name="Sessa L."/>
            <person name="Sheng Y."/>
            <person name="Shibata Y."/>
            <person name="Shimada H."/>
            <person name="Shimada K."/>
            <person name="Silva D."/>
            <person name="Sinclair B."/>
            <person name="Sperling S."/>
            <person name="Stupka E."/>
            <person name="Sugiura K."/>
            <person name="Sultana R."/>
            <person name="Takenaka Y."/>
            <person name="Taki K."/>
            <person name="Tammoja K."/>
            <person name="Tan S.L."/>
            <person name="Tang S."/>
            <person name="Taylor M.S."/>
            <person name="Tegner J."/>
            <person name="Teichmann S.A."/>
            <person name="Ueda H.R."/>
            <person name="van Nimwegen E."/>
            <person name="Verardo R."/>
            <person name="Wei C.L."/>
            <person name="Yagi K."/>
            <person name="Yamanishi H."/>
            <person name="Zabarovsky E."/>
            <person name="Zhu S."/>
            <person name="Zimmer A."/>
            <person name="Hide W."/>
            <person name="Bult C."/>
            <person name="Grimmond S.M."/>
            <person name="Teasdale R.D."/>
            <person name="Liu E.T."/>
            <person name="Brusic V."/>
            <person name="Quackenbush J."/>
            <person name="Wahlestedt C."/>
            <person name="Mattick J.S."/>
            <person name="Hume D.A."/>
            <person name="Kai C."/>
            <person name="Sasaki D."/>
            <person name="Tomaru Y."/>
            <person name="Fukuda S."/>
            <person name="Kanamori-Katayama M."/>
            <person name="Suzuki M."/>
            <person name="Aoki J."/>
            <person name="Arakawa T."/>
            <person name="Iida J."/>
            <person name="Imamura K."/>
            <person name="Itoh M."/>
            <person name="Kato T."/>
            <person name="Kawaji H."/>
            <person name="Kawagashira N."/>
            <person name="Kawashima T."/>
            <person name="Kojima M."/>
            <person name="Kondo S."/>
            <person name="Konno H."/>
            <person name="Nakano K."/>
            <person name="Ninomiya N."/>
            <person name="Nishio T."/>
            <person name="Okada M."/>
            <person name="Plessy C."/>
            <person name="Shibata K."/>
            <person name="Shiraki T."/>
            <person name="Suzuki S."/>
            <person name="Tagami M."/>
            <person name="Waki K."/>
            <person name="Watahiki A."/>
            <person name="Okamura-Oho Y."/>
            <person name="Suzuki H."/>
            <person name="Kawai J."/>
            <person name="Hayashizaki Y."/>
        </authorList>
    </citation>
    <scope>NUCLEOTIDE SEQUENCE [LARGE SCALE MRNA] (ISOFORM 2)</scope>
    <source>
        <strain>C57BL/6J</strain>
        <tissue>Aorta</tissue>
        <tissue>Vein</tissue>
    </source>
</reference>
<reference key="2">
    <citation type="journal article" date="2004" name="Genome Res.">
        <title>The status, quality, and expansion of the NIH full-length cDNA project: the Mammalian Gene Collection (MGC).</title>
        <authorList>
            <consortium name="The MGC Project Team"/>
        </authorList>
    </citation>
    <scope>NUCLEOTIDE SEQUENCE [LARGE SCALE MRNA] (ISOFORM 1)</scope>
    <source>
        <strain>C57BL/6J</strain>
        <tissue>Brain</tissue>
        <tissue>Limb</tissue>
    </source>
</reference>
<organism>
    <name type="scientific">Mus musculus</name>
    <name type="common">Mouse</name>
    <dbReference type="NCBI Taxonomy" id="10090"/>
    <lineage>
        <taxon>Eukaryota</taxon>
        <taxon>Metazoa</taxon>
        <taxon>Chordata</taxon>
        <taxon>Craniata</taxon>
        <taxon>Vertebrata</taxon>
        <taxon>Euteleostomi</taxon>
        <taxon>Mammalia</taxon>
        <taxon>Eutheria</taxon>
        <taxon>Euarchontoglires</taxon>
        <taxon>Glires</taxon>
        <taxon>Rodentia</taxon>
        <taxon>Myomorpha</taxon>
        <taxon>Muroidea</taxon>
        <taxon>Muridae</taxon>
        <taxon>Murinae</taxon>
        <taxon>Mus</taxon>
        <taxon>Mus</taxon>
    </lineage>
</organism>
<keyword id="KW-0025">Alternative splicing</keyword>
<keyword id="KW-0227">DNA damage</keyword>
<keyword id="KW-0234">DNA repair</keyword>
<keyword id="KW-0378">Hydrolase</keyword>
<keyword id="KW-0539">Nucleus</keyword>
<keyword id="KW-0904">Protein phosphatase</keyword>
<keyword id="KW-1185">Reference proteome</keyword>
<proteinExistence type="evidence at transcript level"/>
<dbReference type="EC" id="3.1.3.16"/>
<dbReference type="EC" id="3.1.3.48"/>
<dbReference type="EMBL" id="AK041155">
    <property type="protein sequence ID" value="BAC30842.1"/>
    <property type="molecule type" value="mRNA"/>
</dbReference>
<dbReference type="EMBL" id="BC049794">
    <property type="protein sequence ID" value="AAH49794.1"/>
    <property type="molecule type" value="mRNA"/>
</dbReference>
<dbReference type="EMBL" id="BC057357">
    <property type="protein sequence ID" value="AAH57357.1"/>
    <property type="molecule type" value="mRNA"/>
</dbReference>
<dbReference type="CCDS" id="CCDS26598.1">
    <molecule id="Q6PFY9-1"/>
</dbReference>
<dbReference type="CCDS" id="CCDS49292.1">
    <molecule id="Q6PFY9-2"/>
</dbReference>
<dbReference type="RefSeq" id="NP_001116461.1">
    <molecule id="Q6PFY9-2"/>
    <property type="nucleotide sequence ID" value="NM_001122989.1"/>
</dbReference>
<dbReference type="RefSeq" id="NP_766175.3">
    <molecule id="Q6PFY9-1"/>
    <property type="nucleotide sequence ID" value="NM_172587.3"/>
</dbReference>
<dbReference type="RefSeq" id="XP_036013895.1">
    <molecule id="Q6PFY9-1"/>
    <property type="nucleotide sequence ID" value="XM_036158002.1"/>
</dbReference>
<dbReference type="RefSeq" id="XP_036013896.1">
    <molecule id="Q6PFY9-1"/>
    <property type="nucleotide sequence ID" value="XM_036158003.1"/>
</dbReference>
<dbReference type="SMR" id="Q6PFY9"/>
<dbReference type="FunCoup" id="Q6PFY9">
    <property type="interactions" value="806"/>
</dbReference>
<dbReference type="STRING" id="10090.ENSMUSP00000046003"/>
<dbReference type="GlyGen" id="Q6PFY9">
    <property type="glycosylation" value="1 site"/>
</dbReference>
<dbReference type="PhosphoSitePlus" id="Q6PFY9"/>
<dbReference type="PaxDb" id="10090-ENSMUSP00000046003"/>
<dbReference type="PeptideAtlas" id="Q6PFY9"/>
<dbReference type="ProteomicsDB" id="265696">
    <molecule id="Q6PFY9-1"/>
</dbReference>
<dbReference type="ProteomicsDB" id="265697">
    <molecule id="Q6PFY9-2"/>
</dbReference>
<dbReference type="DNASU" id="218294"/>
<dbReference type="Ensembl" id="ENSMUST00000039318.16">
    <molecule id="Q6PFY9-1"/>
    <property type="protein sequence ID" value="ENSMUSP00000046003.9"/>
    <property type="gene ID" value="ENSMUSG00000033102.16"/>
</dbReference>
<dbReference type="Ensembl" id="ENSMUST00000109769.10">
    <molecule id="Q6PFY9-2"/>
    <property type="protein sequence ID" value="ENSMUSP00000105391.3"/>
    <property type="gene ID" value="ENSMUSG00000033102.16"/>
</dbReference>
<dbReference type="Ensembl" id="ENSMUST00000109770.2">
    <molecule id="Q6PFY9-1"/>
    <property type="protein sequence ID" value="ENSMUSP00000105392.2"/>
    <property type="gene ID" value="ENSMUSG00000033102.16"/>
</dbReference>
<dbReference type="Ensembl" id="ENSMUST00000221139.2">
    <molecule id="Q6PFY9-1"/>
    <property type="protein sequence ID" value="ENSMUSP00000152843.2"/>
    <property type="gene ID" value="ENSMUSG00000033102.16"/>
</dbReference>
<dbReference type="GeneID" id="218294"/>
<dbReference type="KEGG" id="mmu:218294"/>
<dbReference type="UCSC" id="uc007qym.2">
    <molecule id="Q6PFY9-1"/>
    <property type="organism name" value="mouse"/>
</dbReference>
<dbReference type="UCSC" id="uc007qyo.2">
    <molecule id="Q6PFY9-2"/>
    <property type="organism name" value="mouse"/>
</dbReference>
<dbReference type="AGR" id="MGI:2441808"/>
<dbReference type="CTD" id="8555"/>
<dbReference type="MGI" id="MGI:2441808">
    <property type="gene designation" value="Cdc14b"/>
</dbReference>
<dbReference type="VEuPathDB" id="HostDB:ENSMUSG00000033102"/>
<dbReference type="eggNOG" id="KOG1720">
    <property type="taxonomic scope" value="Eukaryota"/>
</dbReference>
<dbReference type="GeneTree" id="ENSGT00940000155950"/>
<dbReference type="HOGENOM" id="CLU_017787_2_0_1"/>
<dbReference type="InParanoid" id="Q6PFY9"/>
<dbReference type="OMA" id="DCFRQKL"/>
<dbReference type="PhylomeDB" id="Q6PFY9"/>
<dbReference type="TreeFam" id="TF101053"/>
<dbReference type="Reactome" id="R-MMU-5687128">
    <property type="pathway name" value="MAPK6/MAPK4 signaling"/>
</dbReference>
<dbReference type="BioGRID-ORCS" id="218294">
    <property type="hits" value="1 hit in 113 CRISPR screens"/>
</dbReference>
<dbReference type="ChiTaRS" id="Cdc14b">
    <property type="organism name" value="mouse"/>
</dbReference>
<dbReference type="PRO" id="PR:Q6PFY9"/>
<dbReference type="Proteomes" id="UP000000589">
    <property type="component" value="Chromosome 13"/>
</dbReference>
<dbReference type="RNAct" id="Q6PFY9">
    <property type="molecule type" value="protein"/>
</dbReference>
<dbReference type="Bgee" id="ENSMUSG00000033102">
    <property type="expression patterns" value="Expressed in manus and 225 other cell types or tissues"/>
</dbReference>
<dbReference type="ExpressionAtlas" id="Q6PFY9">
    <property type="expression patterns" value="baseline and differential"/>
</dbReference>
<dbReference type="GO" id="GO:0005730">
    <property type="term" value="C:nucleolus"/>
    <property type="evidence" value="ECO:0007669"/>
    <property type="project" value="UniProtKB-SubCell"/>
</dbReference>
<dbReference type="GO" id="GO:0005654">
    <property type="term" value="C:nucleoplasm"/>
    <property type="evidence" value="ECO:0000250"/>
    <property type="project" value="UniProtKB"/>
</dbReference>
<dbReference type="GO" id="GO:0004722">
    <property type="term" value="F:protein serine/threonine phosphatase activity"/>
    <property type="evidence" value="ECO:0000250"/>
    <property type="project" value="UniProtKB"/>
</dbReference>
<dbReference type="GO" id="GO:0004725">
    <property type="term" value="F:protein tyrosine phosphatase activity"/>
    <property type="evidence" value="ECO:0007669"/>
    <property type="project" value="UniProtKB-EC"/>
</dbReference>
<dbReference type="GO" id="GO:0006281">
    <property type="term" value="P:DNA repair"/>
    <property type="evidence" value="ECO:0007669"/>
    <property type="project" value="UniProtKB-KW"/>
</dbReference>
<dbReference type="GO" id="GO:0007095">
    <property type="term" value="P:mitotic G2 DNA damage checkpoint signaling"/>
    <property type="evidence" value="ECO:0000250"/>
    <property type="project" value="UniProtKB"/>
</dbReference>
<dbReference type="GO" id="GO:1904668">
    <property type="term" value="P:positive regulation of ubiquitin protein ligase activity"/>
    <property type="evidence" value="ECO:0000250"/>
    <property type="project" value="UniProtKB"/>
</dbReference>
<dbReference type="GO" id="GO:0006470">
    <property type="term" value="P:protein dephosphorylation"/>
    <property type="evidence" value="ECO:0000250"/>
    <property type="project" value="UniProtKB"/>
</dbReference>
<dbReference type="CDD" id="cd14499">
    <property type="entry name" value="CDC14_C"/>
    <property type="match status" value="1"/>
</dbReference>
<dbReference type="CDD" id="cd17657">
    <property type="entry name" value="CDC14_N"/>
    <property type="match status" value="1"/>
</dbReference>
<dbReference type="FunFam" id="3.90.190.10:FF:000006">
    <property type="entry name" value="Dual specificity protein phosphatase CDC14B"/>
    <property type="match status" value="1"/>
</dbReference>
<dbReference type="FunFam" id="3.90.190.10:FF:000031">
    <property type="entry name" value="dual specificity protein phosphatase CDC14B isoform X1"/>
    <property type="match status" value="1"/>
</dbReference>
<dbReference type="Gene3D" id="3.90.190.10">
    <property type="entry name" value="Protein tyrosine phosphatase superfamily"/>
    <property type="match status" value="2"/>
</dbReference>
<dbReference type="InterPro" id="IPR044506">
    <property type="entry name" value="CDC14_C"/>
</dbReference>
<dbReference type="InterPro" id="IPR029260">
    <property type="entry name" value="DSPn"/>
</dbReference>
<dbReference type="InterPro" id="IPR029021">
    <property type="entry name" value="Prot-tyrosine_phosphatase-like"/>
</dbReference>
<dbReference type="InterPro" id="IPR050561">
    <property type="entry name" value="PTP"/>
</dbReference>
<dbReference type="InterPro" id="IPR016130">
    <property type="entry name" value="Tyr_Pase_AS"/>
</dbReference>
<dbReference type="InterPro" id="IPR003595">
    <property type="entry name" value="Tyr_Pase_cat"/>
</dbReference>
<dbReference type="InterPro" id="IPR000387">
    <property type="entry name" value="Tyr_Pase_dom"/>
</dbReference>
<dbReference type="InterPro" id="IPR020422">
    <property type="entry name" value="TYR_PHOSPHATASE_DUAL_dom"/>
</dbReference>
<dbReference type="PANTHER" id="PTHR23339">
    <property type="entry name" value="TYROSINE SPECIFIC PROTEIN PHOSPHATASE AND DUAL SPECIFICITY PROTEIN PHOSPHATASE"/>
    <property type="match status" value="1"/>
</dbReference>
<dbReference type="Pfam" id="PF14671">
    <property type="entry name" value="DSPn"/>
    <property type="match status" value="1"/>
</dbReference>
<dbReference type="Pfam" id="PF22785">
    <property type="entry name" value="Tc-R-P"/>
    <property type="match status" value="1"/>
</dbReference>
<dbReference type="SMART" id="SM00195">
    <property type="entry name" value="DSPc"/>
    <property type="match status" value="1"/>
</dbReference>
<dbReference type="SMART" id="SM00404">
    <property type="entry name" value="PTPc_motif"/>
    <property type="match status" value="1"/>
</dbReference>
<dbReference type="SUPFAM" id="SSF52799">
    <property type="entry name" value="(Phosphotyrosine protein) phosphatases II"/>
    <property type="match status" value="2"/>
</dbReference>
<dbReference type="PROSITE" id="PS00383">
    <property type="entry name" value="TYR_PHOSPHATASE_1"/>
    <property type="match status" value="1"/>
</dbReference>
<dbReference type="PROSITE" id="PS50056">
    <property type="entry name" value="TYR_PHOSPHATASE_2"/>
    <property type="match status" value="1"/>
</dbReference>
<dbReference type="PROSITE" id="PS50054">
    <property type="entry name" value="TYR_PHOSPHATASE_DUAL"/>
    <property type="match status" value="1"/>
</dbReference>
<sequence length="485" mass="55661">MKRKSERRSAWATAPPCSRRSSSSSPGVKKSRSSTPQELHRLEQQDDLYLDITDRLCFAILYSRPKSATNEHYFSIDNELEYENFYADFGPLNLAMVYRYCCKINKKLKSITMLRKKIIHFTGTDQRKQANAAFLVGCYMVIYLGRTPEDAYRTLIFGDTAYIPFRDAAYGSCSFYITLLDCFHAVKKAMQYGFFNFNSFNLDEYEHYEKAENGDFNWIIPERFLAFCGPHSRSRLESGYHQHSPETYIPYFKNHNVTTIIRLNKRMYDAKRFTDAGFDHHDLFFPDGSTPAESIVQEFLDICENVKGAIAVHCKAGLGRTGTLIGCYLMKHYRMTAAESIAWLRICRPGSVIGPQQQFLVMKQSSLWLEGDYFRQKLRGQENGPLREAFSKHLSDADDLSLNGLENQDNQEPEPYSDDDEVSGMTQGDRLRALKSRRQPKASAIPLTCPLAVLTSALCSVAIWWIVCDYILPTLLFCLDGFRTQ</sequence>
<evidence type="ECO:0000250" key="1"/>
<evidence type="ECO:0000255" key="2">
    <source>
        <dbReference type="PROSITE-ProRule" id="PRU00160"/>
    </source>
</evidence>
<evidence type="ECO:0000255" key="3">
    <source>
        <dbReference type="PROSITE-ProRule" id="PRU10044"/>
    </source>
</evidence>
<evidence type="ECO:0000256" key="4">
    <source>
        <dbReference type="SAM" id="MobiDB-lite"/>
    </source>
</evidence>
<evidence type="ECO:0000303" key="5">
    <source>
    </source>
</evidence>
<evidence type="ECO:0000305" key="6"/>
<name>CC14B_MOUSE</name>
<accession>Q6PFY9</accession>
<accession>Q80WC4</accession>
<accession>Q8BLV5</accession>
<feature type="chain" id="PRO_0000094879" description="Dual specificity protein phosphatase CDC14B">
    <location>
        <begin position="1"/>
        <end position="485"/>
    </location>
</feature>
<feature type="domain" description="Tyrosine-protein phosphatase" evidence="2">
    <location>
        <begin position="215"/>
        <end position="374"/>
    </location>
</feature>
<feature type="region of interest" description="Disordered" evidence="4">
    <location>
        <begin position="1"/>
        <end position="38"/>
    </location>
</feature>
<feature type="region of interest" description="A">
    <location>
        <begin position="44"/>
        <end position="198"/>
    </location>
</feature>
<feature type="region of interest" description="Linker">
    <location>
        <begin position="199"/>
        <end position="212"/>
    </location>
</feature>
<feature type="region of interest" description="B">
    <location>
        <begin position="213"/>
        <end position="379"/>
    </location>
</feature>
<feature type="region of interest" description="Disordered" evidence="4">
    <location>
        <begin position="402"/>
        <end position="424"/>
    </location>
</feature>
<feature type="short sequence motif" description="Nucleolar localization signal" evidence="1">
    <location>
        <begin position="1"/>
        <end position="54"/>
    </location>
</feature>
<feature type="compositionally biased region" description="Low complexity" evidence="4">
    <location>
        <begin position="15"/>
        <end position="28"/>
    </location>
</feature>
<feature type="compositionally biased region" description="Acidic residues" evidence="4">
    <location>
        <begin position="409"/>
        <end position="422"/>
    </location>
</feature>
<feature type="active site" description="Phosphocysteine intermediate" evidence="2">
    <location>
        <position position="314"/>
    </location>
</feature>
<feature type="splice variant" id="VSP_012325" description="In isoform 2." evidence="5">
    <original>MKRKSERRSAWATAPPCSRRSSSSSPGVKKSRSSTPQELHRLEQQDDLYLDIT</original>
    <variation>MRREGAGTPLMAEVIR</variation>
    <location>
        <begin position="1"/>
        <end position="53"/>
    </location>
</feature>
<feature type="sequence conflict" description="In Ref. 2; AAH49794." evidence="6" ref="2">
    <original>V</original>
    <variation>I</variation>
    <location>
        <position position="136"/>
    </location>
</feature>
<protein>
    <recommendedName>
        <fullName>Dual specificity protein phosphatase CDC14B</fullName>
        <ecNumber>3.1.3.16</ecNumber>
        <ecNumber>3.1.3.48</ecNumber>
    </recommendedName>
    <alternativeName>
        <fullName>CDC14 cell division cycle 14 homolog B</fullName>
    </alternativeName>
</protein>
<comment type="function">
    <text evidence="1">Dual-specificity phosphatase involved in DNA damage response. Essential regulator of the G2 DNA damage checkpoint: following DNA damage, translocates to the nucleus and dephosphorylates FZR1/CDH1, a key activator of the anaphase promoting complex/cyclosome (APC/C). Dephosphorylates SIRT2 around early anaphase. Dephosphorylation of FZR1/CDH1 activates the APC/C, leading to the ubiquitination of PLK1, preventing entry into mitosis. Preferentially dephosphorylates proteins modified by proline-directed kinases (By similarity).</text>
</comment>
<comment type="catalytic activity">
    <reaction evidence="3">
        <text>O-phospho-L-tyrosyl-[protein] + H2O = L-tyrosyl-[protein] + phosphate</text>
        <dbReference type="Rhea" id="RHEA:10684"/>
        <dbReference type="Rhea" id="RHEA-COMP:10136"/>
        <dbReference type="Rhea" id="RHEA-COMP:20101"/>
        <dbReference type="ChEBI" id="CHEBI:15377"/>
        <dbReference type="ChEBI" id="CHEBI:43474"/>
        <dbReference type="ChEBI" id="CHEBI:46858"/>
        <dbReference type="ChEBI" id="CHEBI:61978"/>
        <dbReference type="EC" id="3.1.3.48"/>
    </reaction>
</comment>
<comment type="catalytic activity">
    <reaction>
        <text>O-phospho-L-seryl-[protein] + H2O = L-seryl-[protein] + phosphate</text>
        <dbReference type="Rhea" id="RHEA:20629"/>
        <dbReference type="Rhea" id="RHEA-COMP:9863"/>
        <dbReference type="Rhea" id="RHEA-COMP:11604"/>
        <dbReference type="ChEBI" id="CHEBI:15377"/>
        <dbReference type="ChEBI" id="CHEBI:29999"/>
        <dbReference type="ChEBI" id="CHEBI:43474"/>
        <dbReference type="ChEBI" id="CHEBI:83421"/>
        <dbReference type="EC" id="3.1.3.16"/>
    </reaction>
</comment>
<comment type="catalytic activity">
    <reaction>
        <text>O-phospho-L-threonyl-[protein] + H2O = L-threonyl-[protein] + phosphate</text>
        <dbReference type="Rhea" id="RHEA:47004"/>
        <dbReference type="Rhea" id="RHEA-COMP:11060"/>
        <dbReference type="Rhea" id="RHEA-COMP:11605"/>
        <dbReference type="ChEBI" id="CHEBI:15377"/>
        <dbReference type="ChEBI" id="CHEBI:30013"/>
        <dbReference type="ChEBI" id="CHEBI:43474"/>
        <dbReference type="ChEBI" id="CHEBI:61977"/>
        <dbReference type="EC" id="3.1.3.16"/>
    </reaction>
</comment>
<comment type="subunit">
    <text evidence="1">Interacts with FZR1/CDH1.</text>
</comment>
<comment type="subcellular location">
    <subcellularLocation>
        <location evidence="1">Nucleus</location>
        <location evidence="1">Nucleolus</location>
    </subcellularLocation>
    <subcellularLocation>
        <location evidence="1">Nucleus</location>
        <location evidence="1">Nucleoplasm</location>
    </subcellularLocation>
    <text evidence="1">Following DNA damage, translocates from the nucleolus to the nucleoplasm and interacts with FZR1/CDH1.</text>
</comment>
<comment type="alternative products">
    <event type="alternative splicing"/>
    <isoform>
        <id>Q6PFY9-1</id>
        <name>1</name>
        <sequence type="displayed"/>
    </isoform>
    <isoform>
        <id>Q6PFY9-2</id>
        <name>2</name>
        <sequence type="described" ref="VSP_012325"/>
    </isoform>
</comment>
<comment type="domain">
    <text>Composed of two structurally equivalent A and B domains that adopt a dual specificity protein phosphatase (DSP) fold.</text>
</comment>
<comment type="similarity">
    <text evidence="6">Belongs to the protein-tyrosine phosphatase family. Non-receptor class CDC14 subfamily.</text>
</comment>
<gene>
    <name type="primary">Cdc14b</name>
</gene>